<dbReference type="EMBL" id="X61797">
    <property type="protein sequence ID" value="CAA43899.1"/>
    <property type="molecule type" value="mRNA"/>
</dbReference>
<dbReference type="EMBL" id="M92992">
    <property type="protein sequence ID" value="AAA33174.1"/>
    <property type="molecule type" value="mRNA"/>
</dbReference>
<dbReference type="EMBL" id="AAFI02000224">
    <property type="protein sequence ID" value="EAL60448.1"/>
    <property type="molecule type" value="Genomic_DNA"/>
</dbReference>
<dbReference type="PIR" id="S17111">
    <property type="entry name" value="S17111"/>
</dbReference>
<dbReference type="RefSeq" id="XP_628885.1">
    <property type="nucleotide sequence ID" value="XM_628883.1"/>
</dbReference>
<dbReference type="SMR" id="P34121"/>
<dbReference type="FunCoup" id="P34121">
    <property type="interactions" value="42"/>
</dbReference>
<dbReference type="IntAct" id="P34121">
    <property type="interactions" value="1"/>
</dbReference>
<dbReference type="STRING" id="44689.P34121"/>
<dbReference type="PaxDb" id="44689-DDB0215369"/>
<dbReference type="EnsemblProtists" id="EAL60448">
    <property type="protein sequence ID" value="EAL60448"/>
    <property type="gene ID" value="DDB_G0293898"/>
</dbReference>
<dbReference type="GeneID" id="8629500"/>
<dbReference type="KEGG" id="ddi:DDB_G0293898"/>
<dbReference type="dictyBase" id="DDB_G0293898">
    <property type="gene designation" value="coaA"/>
</dbReference>
<dbReference type="VEuPathDB" id="AmoebaDB:DDB_G0293898"/>
<dbReference type="eggNOG" id="KOG3655">
    <property type="taxonomic scope" value="Eukaryota"/>
</dbReference>
<dbReference type="HOGENOM" id="CLU_129657_0_0_1"/>
<dbReference type="InParanoid" id="P34121"/>
<dbReference type="OMA" id="WIGPNCK"/>
<dbReference type="PhylomeDB" id="P34121"/>
<dbReference type="PRO" id="PR:P34121"/>
<dbReference type="Proteomes" id="UP000002195">
    <property type="component" value="Chromosome 6"/>
</dbReference>
<dbReference type="GO" id="GO:0015629">
    <property type="term" value="C:actin cytoskeleton"/>
    <property type="evidence" value="ECO:0000305"/>
    <property type="project" value="dictyBase"/>
</dbReference>
<dbReference type="GO" id="GO:0030864">
    <property type="term" value="C:cortical actin cytoskeleton"/>
    <property type="evidence" value="ECO:0000318"/>
    <property type="project" value="GO_Central"/>
</dbReference>
<dbReference type="GO" id="GO:0045335">
    <property type="term" value="C:phagocytic vesicle"/>
    <property type="evidence" value="ECO:0007005"/>
    <property type="project" value="dictyBase"/>
</dbReference>
<dbReference type="GO" id="GO:0030427">
    <property type="term" value="C:site of polarized growth"/>
    <property type="evidence" value="ECO:0000318"/>
    <property type="project" value="GO_Central"/>
</dbReference>
<dbReference type="GO" id="GO:0051015">
    <property type="term" value="F:actin filament binding"/>
    <property type="evidence" value="ECO:0000314"/>
    <property type="project" value="dictyBase"/>
</dbReference>
<dbReference type="GO" id="GO:0030833">
    <property type="term" value="P:regulation of actin filament polymerization"/>
    <property type="evidence" value="ECO:0000314"/>
    <property type="project" value="dictyBase"/>
</dbReference>
<dbReference type="GO" id="GO:0009617">
    <property type="term" value="P:response to bacterium"/>
    <property type="evidence" value="ECO:0007007"/>
    <property type="project" value="dictyBase"/>
</dbReference>
<dbReference type="CDD" id="cd11282">
    <property type="entry name" value="ADF_coactosin_like"/>
    <property type="match status" value="1"/>
</dbReference>
<dbReference type="FunFam" id="3.40.20.10:FF:000018">
    <property type="entry name" value="Coactosin-like 1"/>
    <property type="match status" value="1"/>
</dbReference>
<dbReference type="Gene3D" id="3.40.20.10">
    <property type="entry name" value="Severin"/>
    <property type="match status" value="1"/>
</dbReference>
<dbReference type="InterPro" id="IPR002108">
    <property type="entry name" value="ADF-H"/>
</dbReference>
<dbReference type="InterPro" id="IPR029006">
    <property type="entry name" value="ADF-H/Gelsolin-like_dom_sf"/>
</dbReference>
<dbReference type="PANTHER" id="PTHR10829">
    <property type="entry name" value="CORTACTIN AND DREBRIN"/>
    <property type="match status" value="1"/>
</dbReference>
<dbReference type="PANTHER" id="PTHR10829:SF25">
    <property type="entry name" value="DREBRIN-LIKE PROTEIN"/>
    <property type="match status" value="1"/>
</dbReference>
<dbReference type="Pfam" id="PF00241">
    <property type="entry name" value="Cofilin_ADF"/>
    <property type="match status" value="1"/>
</dbReference>
<dbReference type="SMART" id="SM00102">
    <property type="entry name" value="ADF"/>
    <property type="match status" value="1"/>
</dbReference>
<dbReference type="SUPFAM" id="SSF55753">
    <property type="entry name" value="Actin depolymerizing proteins"/>
    <property type="match status" value="1"/>
</dbReference>
<dbReference type="PROSITE" id="PS51263">
    <property type="entry name" value="ADF_H"/>
    <property type="match status" value="1"/>
</dbReference>
<sequence>MADVSSTELKAAYDEVLADSNDTNWCLFKYEGKNKIVLSGKGSGGFAELAQEINQPSERLYAYLRVVSGDDESKRSKFVFISWCGEEVGPLAKANVSVHKASVKQVIKNIGVEVHYTVADDLNEEELMTKVRKSSGADYSGNKSTN</sequence>
<organism>
    <name type="scientific">Dictyostelium discoideum</name>
    <name type="common">Social amoeba</name>
    <dbReference type="NCBI Taxonomy" id="44689"/>
    <lineage>
        <taxon>Eukaryota</taxon>
        <taxon>Amoebozoa</taxon>
        <taxon>Evosea</taxon>
        <taxon>Eumycetozoa</taxon>
        <taxon>Dictyostelia</taxon>
        <taxon>Dictyosteliales</taxon>
        <taxon>Dictyosteliaceae</taxon>
        <taxon>Dictyostelium</taxon>
    </lineage>
</organism>
<keyword id="KW-0009">Actin-binding</keyword>
<keyword id="KW-0963">Cytoplasm</keyword>
<keyword id="KW-0206">Cytoskeleton</keyword>
<keyword id="KW-0903">Direct protein sequencing</keyword>
<keyword id="KW-1185">Reference proteome</keyword>
<reference key="1">
    <citation type="journal article" date="1993" name="Cell Motil. Cytoskeleton">
        <title>Coactosin, a 17 kDa F-actin binding protein from Dictyostelium discoideum.</title>
        <authorList>
            <person name="de Hostos E.L."/>
            <person name="Bradtke B."/>
            <person name="Lottspeich F."/>
            <person name="Gerisch G."/>
        </authorList>
    </citation>
    <scope>NUCLEOTIDE SEQUENCE [MRNA]</scope>
    <scope>PROTEIN SEQUENCE OF 128-133</scope>
    <source>
        <strain>AX2</strain>
    </source>
</reference>
<reference key="2">
    <citation type="submission" date="1993-10" db="EMBL/GenBank/DDBJ databases">
        <title>Cloning and characterization of a Dictyostelium discoideum cDNA coding for p16, a novel cyclic AMP-regulated protein with a nuclear localization signal.</title>
        <authorList>
            <person name="Sastry R."/>
            <person name="Abbruzzi G."/>
            <person name="Tauber A.I."/>
        </authorList>
    </citation>
    <scope>NUCLEOTIDE SEQUENCE [MRNA]</scope>
    <source>
        <strain>AX3</strain>
    </source>
</reference>
<reference key="3">
    <citation type="journal article" date="2005" name="Nature">
        <title>The genome of the social amoeba Dictyostelium discoideum.</title>
        <authorList>
            <person name="Eichinger L."/>
            <person name="Pachebat J.A."/>
            <person name="Gloeckner G."/>
            <person name="Rajandream M.A."/>
            <person name="Sucgang R."/>
            <person name="Berriman M."/>
            <person name="Song J."/>
            <person name="Olsen R."/>
            <person name="Szafranski K."/>
            <person name="Xu Q."/>
            <person name="Tunggal B."/>
            <person name="Kummerfeld S."/>
            <person name="Madera M."/>
            <person name="Konfortov B.A."/>
            <person name="Rivero F."/>
            <person name="Bankier A.T."/>
            <person name="Lehmann R."/>
            <person name="Hamlin N."/>
            <person name="Davies R."/>
            <person name="Gaudet P."/>
            <person name="Fey P."/>
            <person name="Pilcher K."/>
            <person name="Chen G."/>
            <person name="Saunders D."/>
            <person name="Sodergren E.J."/>
            <person name="Davis P."/>
            <person name="Kerhornou A."/>
            <person name="Nie X."/>
            <person name="Hall N."/>
            <person name="Anjard C."/>
            <person name="Hemphill L."/>
            <person name="Bason N."/>
            <person name="Farbrother P."/>
            <person name="Desany B."/>
            <person name="Just E."/>
            <person name="Morio T."/>
            <person name="Rost R."/>
            <person name="Churcher C.M."/>
            <person name="Cooper J."/>
            <person name="Haydock S."/>
            <person name="van Driessche N."/>
            <person name="Cronin A."/>
            <person name="Goodhead I."/>
            <person name="Muzny D.M."/>
            <person name="Mourier T."/>
            <person name="Pain A."/>
            <person name="Lu M."/>
            <person name="Harper D."/>
            <person name="Lindsay R."/>
            <person name="Hauser H."/>
            <person name="James K.D."/>
            <person name="Quiles M."/>
            <person name="Madan Babu M."/>
            <person name="Saito T."/>
            <person name="Buchrieser C."/>
            <person name="Wardroper A."/>
            <person name="Felder M."/>
            <person name="Thangavelu M."/>
            <person name="Johnson D."/>
            <person name="Knights A."/>
            <person name="Loulseged H."/>
            <person name="Mungall K.L."/>
            <person name="Oliver K."/>
            <person name="Price C."/>
            <person name="Quail M.A."/>
            <person name="Urushihara H."/>
            <person name="Hernandez J."/>
            <person name="Rabbinowitsch E."/>
            <person name="Steffen D."/>
            <person name="Sanders M."/>
            <person name="Ma J."/>
            <person name="Kohara Y."/>
            <person name="Sharp S."/>
            <person name="Simmonds M.N."/>
            <person name="Spiegler S."/>
            <person name="Tivey A."/>
            <person name="Sugano S."/>
            <person name="White B."/>
            <person name="Walker D."/>
            <person name="Woodward J.R."/>
            <person name="Winckler T."/>
            <person name="Tanaka Y."/>
            <person name="Shaulsky G."/>
            <person name="Schleicher M."/>
            <person name="Weinstock G.M."/>
            <person name="Rosenthal A."/>
            <person name="Cox E.C."/>
            <person name="Chisholm R.L."/>
            <person name="Gibbs R.A."/>
            <person name="Loomis W.F."/>
            <person name="Platzer M."/>
            <person name="Kay R.R."/>
            <person name="Williams J.G."/>
            <person name="Dear P.H."/>
            <person name="Noegel A.A."/>
            <person name="Barrell B.G."/>
            <person name="Kuspa A."/>
        </authorList>
    </citation>
    <scope>NUCLEOTIDE SEQUENCE [LARGE SCALE GENOMIC DNA]</scope>
    <source>
        <strain>AX4</strain>
    </source>
</reference>
<reference key="4">
    <citation type="journal article" date="2006" name="J. Proteome Res.">
        <title>Identification of novel centrosomal proteins in Dictyostelium discoideum by comparative proteomic approaches.</title>
        <authorList>
            <person name="Reinders Y."/>
            <person name="Schulz I."/>
            <person name="Graef R."/>
            <person name="Sickmann A."/>
        </authorList>
    </citation>
    <scope>IDENTIFICATION BY MASS SPECTROMETRY [LARGE SCALE ANALYSIS]</scope>
</reference>
<reference key="5">
    <citation type="journal article" date="2006" name="Mol. Cell. Proteomics">
        <title>Proteomics fingerprinting of phagosome maturation and evidence for the role of a Galpha during uptake.</title>
        <authorList>
            <person name="Gotthardt D."/>
            <person name="Blancheteau V."/>
            <person name="Bosserhoff A."/>
            <person name="Ruppert T."/>
            <person name="Delorenzi M."/>
            <person name="Soldati T."/>
        </authorList>
    </citation>
    <scope>IDENTIFICATION BY MASS SPECTROMETRY [LARGE SCALE ANALYSIS]</scope>
    <source>
        <strain>AX2</strain>
    </source>
</reference>
<protein>
    <recommendedName>
        <fullName>Coactosin</fullName>
    </recommendedName>
    <alternativeName>
        <fullName>Cyclic AMP-regulated protein p16</fullName>
    </alternativeName>
    <alternativeName>
        <fullName>Cytoskeletal protein p17</fullName>
    </alternativeName>
</protein>
<gene>
    <name type="primary">coaA</name>
    <name type="synonym">p17</name>
    <name type="ORF">DDB_G0293898</name>
</gene>
<evidence type="ECO:0000255" key="1">
    <source>
        <dbReference type="PROSITE-ProRule" id="PRU00599"/>
    </source>
</evidence>
<evidence type="ECO:0000305" key="2"/>
<name>COAA_DICDI</name>
<proteinExistence type="evidence at protein level"/>
<comment type="function">
    <text>Binds to F-actin in a calcium independent manner. Binds to the filaments along their length.</text>
</comment>
<comment type="subcellular location">
    <subcellularLocation>
        <location>Cytoplasm</location>
        <location>Cytoskeleton</location>
    </subcellularLocation>
</comment>
<comment type="PTM">
    <text>The N-terminus is blocked.</text>
</comment>
<comment type="similarity">
    <text evidence="2">Belongs to the actin-binding proteins ADF family. Coactosin subfamily.</text>
</comment>
<feature type="chain" id="PRO_0000214956" description="Coactosin">
    <location>
        <begin position="1"/>
        <end position="146"/>
    </location>
</feature>
<feature type="domain" description="ADF-H" evidence="1">
    <location>
        <begin position="1"/>
        <end position="132"/>
    </location>
</feature>
<accession>P34121</accession>
<accession>Q54B31</accession>